<accession>Q8NT39</accession>
<dbReference type="EC" id="2.1.1.163" evidence="1"/>
<dbReference type="EMBL" id="BA000036">
    <property type="protein sequence ID" value="BAB97864.1"/>
    <property type="molecule type" value="Genomic_DNA"/>
</dbReference>
<dbReference type="EMBL" id="BX927149">
    <property type="protein sequence ID" value="CAF19185.1"/>
    <property type="molecule type" value="Genomic_DNA"/>
</dbReference>
<dbReference type="RefSeq" id="NP_599716.1">
    <property type="nucleotide sequence ID" value="NC_003450.3"/>
</dbReference>
<dbReference type="RefSeq" id="WP_011013674.1">
    <property type="nucleotide sequence ID" value="NC_006958.1"/>
</dbReference>
<dbReference type="SMR" id="Q8NT39"/>
<dbReference type="STRING" id="196627.cg0556"/>
<dbReference type="DNASU" id="1021475"/>
<dbReference type="KEGG" id="cgb:cg0556"/>
<dbReference type="KEGG" id="cgl:Cgl0471"/>
<dbReference type="PATRIC" id="fig|196627.13.peg.469"/>
<dbReference type="eggNOG" id="COG2226">
    <property type="taxonomic scope" value="Bacteria"/>
</dbReference>
<dbReference type="HOGENOM" id="CLU_037990_0_0_11"/>
<dbReference type="OrthoDB" id="9808140at2"/>
<dbReference type="BioCyc" id="CORYNE:G18NG-10028-MONOMER"/>
<dbReference type="UniPathway" id="UPA00079">
    <property type="reaction ID" value="UER00169"/>
</dbReference>
<dbReference type="Proteomes" id="UP000000582">
    <property type="component" value="Chromosome"/>
</dbReference>
<dbReference type="Proteomes" id="UP000001009">
    <property type="component" value="Chromosome"/>
</dbReference>
<dbReference type="GO" id="GO:0043770">
    <property type="term" value="F:demethylmenaquinone methyltransferase activity"/>
    <property type="evidence" value="ECO:0007669"/>
    <property type="project" value="UniProtKB-UniRule"/>
</dbReference>
<dbReference type="GO" id="GO:0009234">
    <property type="term" value="P:menaquinone biosynthetic process"/>
    <property type="evidence" value="ECO:0007669"/>
    <property type="project" value="UniProtKB-UniRule"/>
</dbReference>
<dbReference type="GO" id="GO:0032259">
    <property type="term" value="P:methylation"/>
    <property type="evidence" value="ECO:0007669"/>
    <property type="project" value="UniProtKB-KW"/>
</dbReference>
<dbReference type="CDD" id="cd02440">
    <property type="entry name" value="AdoMet_MTases"/>
    <property type="match status" value="1"/>
</dbReference>
<dbReference type="Gene3D" id="3.40.50.150">
    <property type="entry name" value="Vaccinia Virus protein VP39"/>
    <property type="match status" value="1"/>
</dbReference>
<dbReference type="HAMAP" id="MF_01813">
    <property type="entry name" value="MenG_UbiE_methyltr"/>
    <property type="match status" value="1"/>
</dbReference>
<dbReference type="InterPro" id="IPR029063">
    <property type="entry name" value="SAM-dependent_MTases_sf"/>
</dbReference>
<dbReference type="InterPro" id="IPR004033">
    <property type="entry name" value="UbiE/COQ5_MeTrFase"/>
</dbReference>
<dbReference type="InterPro" id="IPR023576">
    <property type="entry name" value="UbiE/COQ5_MeTrFase_CS"/>
</dbReference>
<dbReference type="NCBIfam" id="TIGR01934">
    <property type="entry name" value="MenG_MenH_UbiE"/>
    <property type="match status" value="1"/>
</dbReference>
<dbReference type="NCBIfam" id="NF001241">
    <property type="entry name" value="PRK00216.1-2"/>
    <property type="match status" value="1"/>
</dbReference>
<dbReference type="PANTHER" id="PTHR43591:SF24">
    <property type="entry name" value="2-METHOXY-6-POLYPRENYL-1,4-BENZOQUINOL METHYLASE, MITOCHONDRIAL"/>
    <property type="match status" value="1"/>
</dbReference>
<dbReference type="PANTHER" id="PTHR43591">
    <property type="entry name" value="METHYLTRANSFERASE"/>
    <property type="match status" value="1"/>
</dbReference>
<dbReference type="Pfam" id="PF01209">
    <property type="entry name" value="Ubie_methyltran"/>
    <property type="match status" value="1"/>
</dbReference>
<dbReference type="SUPFAM" id="SSF53335">
    <property type="entry name" value="S-adenosyl-L-methionine-dependent methyltransferases"/>
    <property type="match status" value="1"/>
</dbReference>
<dbReference type="PROSITE" id="PS51608">
    <property type="entry name" value="SAM_MT_UBIE"/>
    <property type="match status" value="1"/>
</dbReference>
<dbReference type="PROSITE" id="PS01183">
    <property type="entry name" value="UBIE_1"/>
    <property type="match status" value="1"/>
</dbReference>
<dbReference type="PROSITE" id="PS01184">
    <property type="entry name" value="UBIE_2"/>
    <property type="match status" value="1"/>
</dbReference>
<reference key="1">
    <citation type="journal article" date="2003" name="Appl. Microbiol. Biotechnol.">
        <title>The Corynebacterium glutamicum genome: features and impacts on biotechnological processes.</title>
        <authorList>
            <person name="Ikeda M."/>
            <person name="Nakagawa S."/>
        </authorList>
    </citation>
    <scope>NUCLEOTIDE SEQUENCE [LARGE SCALE GENOMIC DNA]</scope>
    <source>
        <strain>ATCC 13032 / DSM 20300 / JCM 1318 / BCRC 11384 / CCUG 27702 / LMG 3730 / NBRC 12168 / NCIMB 10025 / NRRL B-2784 / 534</strain>
    </source>
</reference>
<reference key="2">
    <citation type="journal article" date="2003" name="J. Biotechnol.">
        <title>The complete Corynebacterium glutamicum ATCC 13032 genome sequence and its impact on the production of L-aspartate-derived amino acids and vitamins.</title>
        <authorList>
            <person name="Kalinowski J."/>
            <person name="Bathe B."/>
            <person name="Bartels D."/>
            <person name="Bischoff N."/>
            <person name="Bott M."/>
            <person name="Burkovski A."/>
            <person name="Dusch N."/>
            <person name="Eggeling L."/>
            <person name="Eikmanns B.J."/>
            <person name="Gaigalat L."/>
            <person name="Goesmann A."/>
            <person name="Hartmann M."/>
            <person name="Huthmacher K."/>
            <person name="Kraemer R."/>
            <person name="Linke B."/>
            <person name="McHardy A.C."/>
            <person name="Meyer F."/>
            <person name="Moeckel B."/>
            <person name="Pfefferle W."/>
            <person name="Puehler A."/>
            <person name="Rey D.A."/>
            <person name="Rueckert C."/>
            <person name="Rupp O."/>
            <person name="Sahm H."/>
            <person name="Wendisch V.F."/>
            <person name="Wiegraebe I."/>
            <person name="Tauch A."/>
        </authorList>
    </citation>
    <scope>NUCLEOTIDE SEQUENCE [LARGE SCALE GENOMIC DNA]</scope>
    <source>
        <strain>ATCC 13032 / DSM 20300 / JCM 1318 / BCRC 11384 / CCUG 27702 / LMG 3730 / NBRC 12168 / NCIMB 10025 / NRRL B-2784 / 534</strain>
    </source>
</reference>
<name>MENG_CORGL</name>
<comment type="function">
    <text evidence="1">Methyltransferase required for the conversion of demethylmenaquinol (DMKH2) to menaquinol (MKH2).</text>
</comment>
<comment type="catalytic activity">
    <reaction evidence="1">
        <text>a 2-demethylmenaquinol + S-adenosyl-L-methionine = a menaquinol + S-adenosyl-L-homocysteine + H(+)</text>
        <dbReference type="Rhea" id="RHEA:42640"/>
        <dbReference type="Rhea" id="RHEA-COMP:9539"/>
        <dbReference type="Rhea" id="RHEA-COMP:9563"/>
        <dbReference type="ChEBI" id="CHEBI:15378"/>
        <dbReference type="ChEBI" id="CHEBI:18151"/>
        <dbReference type="ChEBI" id="CHEBI:55437"/>
        <dbReference type="ChEBI" id="CHEBI:57856"/>
        <dbReference type="ChEBI" id="CHEBI:59789"/>
        <dbReference type="EC" id="2.1.1.163"/>
    </reaction>
</comment>
<comment type="pathway">
    <text evidence="1">Quinol/quinone metabolism; menaquinone biosynthesis; menaquinol from 1,4-dihydroxy-2-naphthoate: step 2/2.</text>
</comment>
<comment type="similarity">
    <text evidence="1">Belongs to the class I-like SAM-binding methyltransferase superfamily. MenG/UbiE family.</text>
</comment>
<feature type="chain" id="PRO_0000193270" description="Demethylmenaquinone methyltransferase">
    <location>
        <begin position="1"/>
        <end position="230"/>
    </location>
</feature>
<feature type="binding site" evidence="1">
    <location>
        <position position="62"/>
    </location>
    <ligand>
        <name>S-adenosyl-L-methionine</name>
        <dbReference type="ChEBI" id="CHEBI:59789"/>
    </ligand>
</feature>
<feature type="binding site" evidence="1">
    <location>
        <position position="80"/>
    </location>
    <ligand>
        <name>S-adenosyl-L-methionine</name>
        <dbReference type="ChEBI" id="CHEBI:59789"/>
    </ligand>
</feature>
<feature type="binding site" evidence="1">
    <location>
        <begin position="100"/>
        <end position="101"/>
    </location>
    <ligand>
        <name>S-adenosyl-L-methionine</name>
        <dbReference type="ChEBI" id="CHEBI:59789"/>
    </ligand>
</feature>
<feature type="binding site" evidence="1">
    <location>
        <position position="117"/>
    </location>
    <ligand>
        <name>S-adenosyl-L-methionine</name>
        <dbReference type="ChEBI" id="CHEBI:59789"/>
    </ligand>
</feature>
<protein>
    <recommendedName>
        <fullName evidence="1">Demethylmenaquinone methyltransferase</fullName>
        <ecNumber evidence="1">2.1.1.163</ecNumber>
    </recommendedName>
</protein>
<keyword id="KW-0474">Menaquinone biosynthesis</keyword>
<keyword id="KW-0489">Methyltransferase</keyword>
<keyword id="KW-1185">Reference proteome</keyword>
<keyword id="KW-0949">S-adenosyl-L-methionine</keyword>
<keyword id="KW-0808">Transferase</keyword>
<proteinExistence type="inferred from homology"/>
<gene>
    <name evidence="1" type="primary">menG</name>
    <name type="ordered locus">Cgl0471</name>
    <name type="ordered locus">cg0556</name>
</gene>
<organism>
    <name type="scientific">Corynebacterium glutamicum (strain ATCC 13032 / DSM 20300 / JCM 1318 / BCRC 11384 / CCUG 27702 / LMG 3730 / NBRC 12168 / NCIMB 10025 / NRRL B-2784 / 534)</name>
    <dbReference type="NCBI Taxonomy" id="196627"/>
    <lineage>
        <taxon>Bacteria</taxon>
        <taxon>Bacillati</taxon>
        <taxon>Actinomycetota</taxon>
        <taxon>Actinomycetes</taxon>
        <taxon>Mycobacteriales</taxon>
        <taxon>Corynebacteriaceae</taxon>
        <taxon>Corynebacterium</taxon>
    </lineage>
</organism>
<evidence type="ECO:0000255" key="1">
    <source>
        <dbReference type="HAMAP-Rule" id="MF_01813"/>
    </source>
</evidence>
<sequence>MAKADLDKDPFDVASMFDDVGKNYDLTNTVLSFGQDRVWRKRTRQRLDLKPGEKVLDLAAGTAVSTVELAKSGAFCVACDFSQGMLAAGKDRDVSKVVGDGMQLPFADNSFDAVTISYGLRNIHDFRAGLKEMARVTKPGGRLTVAEFSTPVIPVFGTVYKEYLMRLLPQAARAVSSNPEAYIYLADSIRAWPSQAELAREINQNGWSDCGWQNLTFGIVALHSAIKPEN</sequence>